<comment type="function">
    <text evidence="1">Catalyzes the reversible adenylation of nicotinate mononucleotide (NaMN) to nicotinic acid adenine dinucleotide (NaAD).</text>
</comment>
<comment type="catalytic activity">
    <reaction evidence="1">
        <text>nicotinate beta-D-ribonucleotide + ATP + H(+) = deamido-NAD(+) + diphosphate</text>
        <dbReference type="Rhea" id="RHEA:22860"/>
        <dbReference type="ChEBI" id="CHEBI:15378"/>
        <dbReference type="ChEBI" id="CHEBI:30616"/>
        <dbReference type="ChEBI" id="CHEBI:33019"/>
        <dbReference type="ChEBI" id="CHEBI:57502"/>
        <dbReference type="ChEBI" id="CHEBI:58437"/>
        <dbReference type="EC" id="2.7.7.18"/>
    </reaction>
</comment>
<comment type="activity regulation">
    <text evidence="1">Activity is susceptible to product inhibition.</text>
</comment>
<comment type="pathway">
    <text>Cofactor biosynthesis; NAD(+) biosynthesis; deamido-NAD(+) from nicotinate D-ribonucleotide: step 1/1.</text>
</comment>
<comment type="similarity">
    <text evidence="2">Belongs to the NadD family.</text>
</comment>
<sequence length="213" mass="24528">MKSLQALFGGTFDPVHYGHLKPVETLANLIGLTRVTIIPNNVPPHRPQPEANSVQRKHMLELAIADKPLFTLDERELKRNAPSYTAQTLKEWRQEQGPDVPLAFIIGQDSLLTFPTWYEYETILDNAHLIVCRRPGYPLEMAQPQYQQWLEDHLTHNPEDLHLQPAGKIYLAETPWFNISATIIRERLQNGESCEDLLPEPVLTYINQQGLYR</sequence>
<evidence type="ECO:0000269" key="1">
    <source>
    </source>
</evidence>
<evidence type="ECO:0000305" key="2"/>
<evidence type="ECO:0007829" key="3">
    <source>
        <dbReference type="PDB" id="1K4K"/>
    </source>
</evidence>
<evidence type="ECO:0007829" key="4">
    <source>
        <dbReference type="PDB" id="1K4M"/>
    </source>
</evidence>
<evidence type="ECO:0007829" key="5">
    <source>
        <dbReference type="PDB" id="6KH2"/>
    </source>
</evidence>
<feature type="chain" id="PRO_0000181407" description="Nicotinate-nucleotide adenylyltransferase">
    <location>
        <begin position="1"/>
        <end position="213"/>
    </location>
</feature>
<feature type="strand" evidence="4">
    <location>
        <begin position="5"/>
        <end position="10"/>
    </location>
</feature>
<feature type="helix" evidence="4">
    <location>
        <begin position="17"/>
        <end position="30"/>
    </location>
</feature>
<feature type="strand" evidence="4">
    <location>
        <begin position="35"/>
        <end position="39"/>
    </location>
</feature>
<feature type="helix" evidence="4">
    <location>
        <begin position="53"/>
        <end position="64"/>
    </location>
</feature>
<feature type="strand" evidence="4">
    <location>
        <begin position="70"/>
        <end position="72"/>
    </location>
</feature>
<feature type="helix" evidence="4">
    <location>
        <begin position="75"/>
        <end position="78"/>
    </location>
</feature>
<feature type="helix" evidence="4">
    <location>
        <begin position="85"/>
        <end position="96"/>
    </location>
</feature>
<feature type="strand" evidence="5">
    <location>
        <begin position="98"/>
        <end position="100"/>
    </location>
</feature>
<feature type="strand" evidence="4">
    <location>
        <begin position="102"/>
        <end position="107"/>
    </location>
</feature>
<feature type="helix" evidence="4">
    <location>
        <begin position="108"/>
        <end position="113"/>
    </location>
</feature>
<feature type="helix" evidence="4">
    <location>
        <begin position="114"/>
        <end position="116"/>
    </location>
</feature>
<feature type="helix" evidence="4">
    <location>
        <begin position="120"/>
        <end position="126"/>
    </location>
</feature>
<feature type="strand" evidence="4">
    <location>
        <begin position="128"/>
        <end position="132"/>
    </location>
</feature>
<feature type="helix" evidence="4">
    <location>
        <begin position="144"/>
        <end position="153"/>
    </location>
</feature>
<feature type="strand" evidence="3">
    <location>
        <begin position="154"/>
        <end position="156"/>
    </location>
</feature>
<feature type="helix" evidence="4">
    <location>
        <begin position="160"/>
        <end position="163"/>
    </location>
</feature>
<feature type="strand" evidence="4">
    <location>
        <begin position="164"/>
        <end position="166"/>
    </location>
</feature>
<feature type="strand" evidence="4">
    <location>
        <begin position="169"/>
        <end position="172"/>
    </location>
</feature>
<feature type="helix" evidence="4">
    <location>
        <begin position="181"/>
        <end position="189"/>
    </location>
</feature>
<feature type="turn" evidence="4">
    <location>
        <begin position="195"/>
        <end position="197"/>
    </location>
</feature>
<feature type="helix" evidence="4">
    <location>
        <begin position="200"/>
        <end position="209"/>
    </location>
</feature>
<feature type="turn" evidence="4">
    <location>
        <begin position="210"/>
        <end position="212"/>
    </location>
</feature>
<proteinExistence type="evidence at protein level"/>
<protein>
    <recommendedName>
        <fullName>Nicotinate-nucleotide adenylyltransferase</fullName>
        <ecNumber evidence="1">2.7.7.18</ecNumber>
    </recommendedName>
    <alternativeName>
        <fullName>Deamido-NAD(+) diphosphorylase</fullName>
    </alternativeName>
    <alternativeName>
        <fullName>Deamido-NAD(+) pyrophosphorylase</fullName>
    </alternativeName>
    <alternativeName>
        <fullName>Nicotinate mononucleotide adenylyltransferase</fullName>
        <shortName>NaMN adenylyltransferase</shortName>
    </alternativeName>
</protein>
<dbReference type="EC" id="2.7.7.18" evidence="1"/>
<dbReference type="EMBL" id="U23163">
    <property type="protein sequence ID" value="AAA64852.1"/>
    <property type="molecule type" value="Genomic_DNA"/>
</dbReference>
<dbReference type="EMBL" id="U82598">
    <property type="protein sequence ID" value="AAB40840.1"/>
    <property type="molecule type" value="Genomic_DNA"/>
</dbReference>
<dbReference type="EMBL" id="U00096">
    <property type="protein sequence ID" value="AAC73740.1"/>
    <property type="molecule type" value="Genomic_DNA"/>
</dbReference>
<dbReference type="EMBL" id="AP009048">
    <property type="protein sequence ID" value="BAA35286.1"/>
    <property type="molecule type" value="Genomic_DNA"/>
</dbReference>
<dbReference type="PIR" id="E64798">
    <property type="entry name" value="E64798"/>
</dbReference>
<dbReference type="RefSeq" id="NP_415172.1">
    <property type="nucleotide sequence ID" value="NC_000913.3"/>
</dbReference>
<dbReference type="RefSeq" id="WP_000838889.1">
    <property type="nucleotide sequence ID" value="NZ_STEB01000031.1"/>
</dbReference>
<dbReference type="PDB" id="1K4K">
    <property type="method" value="X-ray"/>
    <property type="resolution" value="2.00 A"/>
    <property type="chains" value="A/B/C/D=1-213"/>
</dbReference>
<dbReference type="PDB" id="1K4M">
    <property type="method" value="X-ray"/>
    <property type="resolution" value="1.90 A"/>
    <property type="chains" value="A/B/C=1-213"/>
</dbReference>
<dbReference type="PDB" id="6KG3">
    <property type="method" value="X-ray"/>
    <property type="resolution" value="3.08 A"/>
    <property type="chains" value="A/B/C/D/E/F=1-213"/>
</dbReference>
<dbReference type="PDB" id="6KH2">
    <property type="method" value="X-ray"/>
    <property type="resolution" value="3.04 A"/>
    <property type="chains" value="A/B/C/D/E/F=1-213"/>
</dbReference>
<dbReference type="PDBsum" id="1K4K"/>
<dbReference type="PDBsum" id="1K4M"/>
<dbReference type="PDBsum" id="6KG3"/>
<dbReference type="PDBsum" id="6KH2"/>
<dbReference type="SMR" id="P0A752"/>
<dbReference type="BioGRID" id="4261659">
    <property type="interactions" value="8"/>
</dbReference>
<dbReference type="FunCoup" id="P0A752">
    <property type="interactions" value="429"/>
</dbReference>
<dbReference type="IntAct" id="P0A752">
    <property type="interactions" value="7"/>
</dbReference>
<dbReference type="STRING" id="511145.b0639"/>
<dbReference type="BindingDB" id="P0A752"/>
<dbReference type="ChEMBL" id="CHEMBL3638351"/>
<dbReference type="jPOST" id="P0A752"/>
<dbReference type="PaxDb" id="511145-b0639"/>
<dbReference type="EnsemblBacteria" id="AAC73740">
    <property type="protein sequence ID" value="AAC73740"/>
    <property type="gene ID" value="b0639"/>
</dbReference>
<dbReference type="GeneID" id="93776843"/>
<dbReference type="GeneID" id="945248"/>
<dbReference type="KEGG" id="ecj:JW0634"/>
<dbReference type="KEGG" id="eco:b0639"/>
<dbReference type="KEGG" id="ecoc:C3026_03195"/>
<dbReference type="PATRIC" id="fig|1411691.4.peg.1629"/>
<dbReference type="EchoBASE" id="EB3030"/>
<dbReference type="eggNOG" id="COG1057">
    <property type="taxonomic scope" value="Bacteria"/>
</dbReference>
<dbReference type="HOGENOM" id="CLU_069765_0_0_6"/>
<dbReference type="InParanoid" id="P0A752"/>
<dbReference type="OMA" id="WIMGADS"/>
<dbReference type="OrthoDB" id="5295945at2"/>
<dbReference type="PhylomeDB" id="P0A752"/>
<dbReference type="BioCyc" id="EcoCyc:NICONUCADENYLYLTRAN-MONOMER"/>
<dbReference type="BioCyc" id="MetaCyc:NICONUCADENYLYLTRAN-MONOMER"/>
<dbReference type="BRENDA" id="2.7.7.1">
    <property type="organism ID" value="2026"/>
</dbReference>
<dbReference type="BRENDA" id="2.7.7.18">
    <property type="organism ID" value="2026"/>
</dbReference>
<dbReference type="UniPathway" id="UPA00253">
    <property type="reaction ID" value="UER00332"/>
</dbReference>
<dbReference type="EvolutionaryTrace" id="P0A752"/>
<dbReference type="PRO" id="PR:P0A752"/>
<dbReference type="Proteomes" id="UP000000625">
    <property type="component" value="Chromosome"/>
</dbReference>
<dbReference type="GO" id="GO:0005524">
    <property type="term" value="F:ATP binding"/>
    <property type="evidence" value="ECO:0007669"/>
    <property type="project" value="UniProtKB-KW"/>
</dbReference>
<dbReference type="GO" id="GO:0000309">
    <property type="term" value="F:nicotinamide-nucleotide adenylyltransferase activity"/>
    <property type="evidence" value="ECO:0000318"/>
    <property type="project" value="GO_Central"/>
</dbReference>
<dbReference type="GO" id="GO:0004515">
    <property type="term" value="F:nicotinate-nucleotide adenylyltransferase activity"/>
    <property type="evidence" value="ECO:0000314"/>
    <property type="project" value="EcoCyc"/>
</dbReference>
<dbReference type="GO" id="GO:0034628">
    <property type="term" value="P:'de novo' NAD biosynthetic process from L-aspartate"/>
    <property type="evidence" value="ECO:0000315"/>
    <property type="project" value="EcoCyc"/>
</dbReference>
<dbReference type="GO" id="GO:0009435">
    <property type="term" value="P:NAD biosynthetic process"/>
    <property type="evidence" value="ECO:0000318"/>
    <property type="project" value="GO_Central"/>
</dbReference>
<dbReference type="GO" id="GO:0034355">
    <property type="term" value="P:NAD biosynthetic process via the salvage pathway"/>
    <property type="evidence" value="ECO:0000315"/>
    <property type="project" value="EcoCyc"/>
</dbReference>
<dbReference type="CDD" id="cd02165">
    <property type="entry name" value="NMNAT"/>
    <property type="match status" value="1"/>
</dbReference>
<dbReference type="FunFam" id="3.40.50.620:FF:000039">
    <property type="entry name" value="Probable nicotinate-nucleotide adenylyltransferase"/>
    <property type="match status" value="1"/>
</dbReference>
<dbReference type="Gene3D" id="3.40.50.620">
    <property type="entry name" value="HUPs"/>
    <property type="match status" value="1"/>
</dbReference>
<dbReference type="HAMAP" id="MF_00244">
    <property type="entry name" value="NaMN_adenylyltr"/>
    <property type="match status" value="1"/>
</dbReference>
<dbReference type="InterPro" id="IPR004821">
    <property type="entry name" value="Cyt_trans-like"/>
</dbReference>
<dbReference type="InterPro" id="IPR005248">
    <property type="entry name" value="NadD/NMNAT"/>
</dbReference>
<dbReference type="InterPro" id="IPR014729">
    <property type="entry name" value="Rossmann-like_a/b/a_fold"/>
</dbReference>
<dbReference type="NCBIfam" id="TIGR00125">
    <property type="entry name" value="cyt_tran_rel"/>
    <property type="match status" value="1"/>
</dbReference>
<dbReference type="NCBIfam" id="TIGR00482">
    <property type="entry name" value="nicotinate (nicotinamide) nucleotide adenylyltransferase"/>
    <property type="match status" value="1"/>
</dbReference>
<dbReference type="NCBIfam" id="NF000839">
    <property type="entry name" value="PRK00071.1-1"/>
    <property type="match status" value="1"/>
</dbReference>
<dbReference type="NCBIfam" id="NF000840">
    <property type="entry name" value="PRK00071.1-3"/>
    <property type="match status" value="1"/>
</dbReference>
<dbReference type="PANTHER" id="PTHR39321">
    <property type="entry name" value="NICOTINATE-NUCLEOTIDE ADENYLYLTRANSFERASE-RELATED"/>
    <property type="match status" value="1"/>
</dbReference>
<dbReference type="PANTHER" id="PTHR39321:SF3">
    <property type="entry name" value="PHOSPHOPANTETHEINE ADENYLYLTRANSFERASE"/>
    <property type="match status" value="1"/>
</dbReference>
<dbReference type="Pfam" id="PF01467">
    <property type="entry name" value="CTP_transf_like"/>
    <property type="match status" value="1"/>
</dbReference>
<dbReference type="SUPFAM" id="SSF52374">
    <property type="entry name" value="Nucleotidylyl transferase"/>
    <property type="match status" value="1"/>
</dbReference>
<gene>
    <name type="primary">nadD</name>
    <name type="synonym">ybeN</name>
    <name type="ordered locus">b0639</name>
    <name type="ordered locus">JW0634</name>
</gene>
<accession>P0A752</accession>
<accession>P52085</accession>
<organism>
    <name type="scientific">Escherichia coli (strain K12)</name>
    <dbReference type="NCBI Taxonomy" id="83333"/>
    <lineage>
        <taxon>Bacteria</taxon>
        <taxon>Pseudomonadati</taxon>
        <taxon>Pseudomonadota</taxon>
        <taxon>Gammaproteobacteria</taxon>
        <taxon>Enterobacterales</taxon>
        <taxon>Enterobacteriaceae</taxon>
        <taxon>Escherichia</taxon>
    </lineage>
</organism>
<keyword id="KW-0002">3D-structure</keyword>
<keyword id="KW-0067">ATP-binding</keyword>
<keyword id="KW-0520">NAD</keyword>
<keyword id="KW-0547">Nucleotide-binding</keyword>
<keyword id="KW-0548">Nucleotidyltransferase</keyword>
<keyword id="KW-0662">Pyridine nucleotide biosynthesis</keyword>
<keyword id="KW-1185">Reference proteome</keyword>
<keyword id="KW-0808">Transferase</keyword>
<name>NADD_ECOLI</name>
<reference key="1">
    <citation type="submission" date="1995-04" db="EMBL/GenBank/DDBJ databases">
        <authorList>
            <person name="Addinall S.G."/>
            <person name="Donachie W.D."/>
        </authorList>
    </citation>
    <scope>NUCLEOTIDE SEQUENCE [GENOMIC DNA]</scope>
    <source>
        <strain>K12 / W3110 / ATCC 27325 / DSM 5911</strain>
    </source>
</reference>
<reference key="2">
    <citation type="journal article" date="1996" name="DNA Res.">
        <title>A 718-kb DNA sequence of the Escherichia coli K-12 genome corresponding to the 12.7-28.0 min region on the linkage map.</title>
        <authorList>
            <person name="Oshima T."/>
            <person name="Aiba H."/>
            <person name="Baba T."/>
            <person name="Fujita K."/>
            <person name="Hayashi K."/>
            <person name="Honjo A."/>
            <person name="Ikemoto K."/>
            <person name="Inada T."/>
            <person name="Itoh T."/>
            <person name="Kajihara M."/>
            <person name="Kanai K."/>
            <person name="Kashimoto K."/>
            <person name="Kimura S."/>
            <person name="Kitagawa M."/>
            <person name="Makino K."/>
            <person name="Masuda S."/>
            <person name="Miki T."/>
            <person name="Mizobuchi K."/>
            <person name="Mori H."/>
            <person name="Motomura K."/>
            <person name="Nakamura Y."/>
            <person name="Nashimoto H."/>
            <person name="Nishio Y."/>
            <person name="Saito N."/>
            <person name="Sampei G."/>
            <person name="Seki Y."/>
            <person name="Tagami H."/>
            <person name="Takemoto K."/>
            <person name="Wada C."/>
            <person name="Yamamoto Y."/>
            <person name="Yano M."/>
            <person name="Horiuchi T."/>
        </authorList>
    </citation>
    <scope>NUCLEOTIDE SEQUENCE [LARGE SCALE GENOMIC DNA]</scope>
    <source>
        <strain>K12 / W3110 / ATCC 27325 / DSM 5911</strain>
    </source>
</reference>
<reference key="3">
    <citation type="submission" date="1997-01" db="EMBL/GenBank/DDBJ databases">
        <title>Sequence of minutes 4-25 of Escherichia coli.</title>
        <authorList>
            <person name="Chung E."/>
            <person name="Allen E."/>
            <person name="Araujo R."/>
            <person name="Aparicio A.M."/>
            <person name="Davis K."/>
            <person name="Duncan M."/>
            <person name="Federspiel N."/>
            <person name="Hyman R."/>
            <person name="Kalman S."/>
            <person name="Komp C."/>
            <person name="Kurdi O."/>
            <person name="Lew H."/>
            <person name="Lin D."/>
            <person name="Namath A."/>
            <person name="Oefner P."/>
            <person name="Roberts D."/>
            <person name="Schramm S."/>
            <person name="Davis R.W."/>
        </authorList>
    </citation>
    <scope>NUCLEOTIDE SEQUENCE [LARGE SCALE GENOMIC DNA]</scope>
    <source>
        <strain>K12 / MG1655 / ATCC 47076</strain>
    </source>
</reference>
<reference key="4">
    <citation type="journal article" date="1997" name="Science">
        <title>The complete genome sequence of Escherichia coli K-12.</title>
        <authorList>
            <person name="Blattner F.R."/>
            <person name="Plunkett G. III"/>
            <person name="Bloch C.A."/>
            <person name="Perna N.T."/>
            <person name="Burland V."/>
            <person name="Riley M."/>
            <person name="Collado-Vides J."/>
            <person name="Glasner J.D."/>
            <person name="Rode C.K."/>
            <person name="Mayhew G.F."/>
            <person name="Gregor J."/>
            <person name="Davis N.W."/>
            <person name="Kirkpatrick H.A."/>
            <person name="Goeden M.A."/>
            <person name="Rose D.J."/>
            <person name="Mau B."/>
            <person name="Shao Y."/>
        </authorList>
    </citation>
    <scope>NUCLEOTIDE SEQUENCE [LARGE SCALE GENOMIC DNA]</scope>
    <source>
        <strain>K12 / MG1655 / ATCC 47076</strain>
    </source>
</reference>
<reference key="5">
    <citation type="journal article" date="2006" name="Mol. Syst. Biol.">
        <title>Highly accurate genome sequences of Escherichia coli K-12 strains MG1655 and W3110.</title>
        <authorList>
            <person name="Hayashi K."/>
            <person name="Morooka N."/>
            <person name="Yamamoto Y."/>
            <person name="Fujita K."/>
            <person name="Isono K."/>
            <person name="Choi S."/>
            <person name="Ohtsubo E."/>
            <person name="Baba T."/>
            <person name="Wanner B.L."/>
            <person name="Mori H."/>
            <person name="Horiuchi T."/>
        </authorList>
    </citation>
    <scope>NUCLEOTIDE SEQUENCE [LARGE SCALE GENOMIC DNA]</scope>
    <source>
        <strain>K12 / W3110 / ATCC 27325 / DSM 5911</strain>
    </source>
</reference>
<reference key="6">
    <citation type="journal article" date="1999" name="Electrophoresis">
        <title>Enrichment of low abundance proteins of Escherichia coli by hydroxyapatite chromatography.</title>
        <authorList>
            <person name="Fountoulakis M."/>
            <person name="Takacs M.-F."/>
            <person name="Berndt P."/>
            <person name="Langen H."/>
            <person name="Takacs B."/>
        </authorList>
    </citation>
    <scope>IDENTIFICATION BY MASS SPECTROMETRY</scope>
    <source>
        <strain>B / BL21</strain>
    </source>
</reference>
<reference key="7">
    <citation type="journal article" date="2000" name="J. Bacteriol.">
        <title>Identification of the Escherichia coli nicotinic acid mononucleotide adenylyltransferase gene.</title>
        <authorList>
            <person name="Mehl R.A."/>
            <person name="Kinsland C."/>
            <person name="Begley T.P."/>
        </authorList>
    </citation>
    <scope>FUNCTION</scope>
    <scope>CATALYTIC ACTIVITY</scope>
    <scope>ACTIVITY REGULATION</scope>
    <source>
        <strain>B</strain>
    </source>
</reference>
<reference key="8">
    <citation type="journal article" date="2002" name="Structure">
        <title>Crystal structures of E. coli nicotinate mononucleotide adenylyltransferase and its complex with deamido-NAD.</title>
        <authorList>
            <person name="Zhang H."/>
            <person name="Zhou T."/>
            <person name="Kurnasov O."/>
            <person name="Cheek S."/>
            <person name="Grishin N.V."/>
            <person name="Osterman A."/>
        </authorList>
    </citation>
    <scope>X-RAY CRYSTALLOGRAPHY (2.0 ANGSTROMS)</scope>
</reference>